<feature type="chain" id="PRO_0000169542" description="GMP/IMP nucleotidase YrfG">
    <location>
        <begin position="1"/>
        <end position="222"/>
    </location>
</feature>
<feature type="active site" description="Nucleophile" evidence="1">
    <location>
        <position position="9"/>
    </location>
</feature>
<feature type="binding site" evidence="1">
    <location>
        <begin position="9"/>
        <end position="11"/>
    </location>
    <ligand>
        <name>substrate</name>
    </ligand>
</feature>
<feature type="binding site" evidence="1">
    <location>
        <position position="9"/>
    </location>
    <ligand>
        <name>Mg(2+)</name>
        <dbReference type="ChEBI" id="CHEBI:18420"/>
    </ligand>
</feature>
<feature type="binding site" evidence="1">
    <location>
        <position position="11"/>
    </location>
    <ligand>
        <name>Mg(2+)</name>
        <dbReference type="ChEBI" id="CHEBI:18420"/>
    </ligand>
</feature>
<feature type="binding site" evidence="1">
    <location>
        <position position="149"/>
    </location>
    <ligand>
        <name>substrate</name>
    </ligand>
</feature>
<feature type="binding site" evidence="1">
    <location>
        <position position="174"/>
    </location>
    <ligand>
        <name>Mg(2+)</name>
        <dbReference type="ChEBI" id="CHEBI:18420"/>
    </ligand>
</feature>
<proteinExistence type="evidence at protein level"/>
<accession>P64636</accession>
<accession>P45801</accession>
<accession>Q2M764</accession>
<gene>
    <name type="primary">yrfG</name>
    <name type="ordered locus">b3399</name>
    <name type="ordered locus">JW5865</name>
</gene>
<organism>
    <name type="scientific">Escherichia coli (strain K12)</name>
    <dbReference type="NCBI Taxonomy" id="83333"/>
    <lineage>
        <taxon>Bacteria</taxon>
        <taxon>Pseudomonadati</taxon>
        <taxon>Pseudomonadota</taxon>
        <taxon>Gammaproteobacteria</taxon>
        <taxon>Enterobacterales</taxon>
        <taxon>Enterobacteriaceae</taxon>
        <taxon>Escherichia</taxon>
    </lineage>
</organism>
<protein>
    <recommendedName>
        <fullName>GMP/IMP nucleotidase YrfG</fullName>
        <ecNumber>3.1.3.5</ecNumber>
    </recommendedName>
</protein>
<name>YRFG_ECOLI</name>
<dbReference type="EC" id="3.1.3.5"/>
<dbReference type="EMBL" id="U18997">
    <property type="protein sequence ID" value="AAA58196.1"/>
    <property type="status" value="ALT_INIT"/>
    <property type="molecule type" value="Genomic_DNA"/>
</dbReference>
<dbReference type="EMBL" id="U00096">
    <property type="protein sequence ID" value="AAC76424.2"/>
    <property type="molecule type" value="Genomic_DNA"/>
</dbReference>
<dbReference type="EMBL" id="AP009048">
    <property type="protein sequence ID" value="BAE77892.1"/>
    <property type="molecule type" value="Genomic_DNA"/>
</dbReference>
<dbReference type="PIR" id="B65135">
    <property type="entry name" value="B65135"/>
</dbReference>
<dbReference type="RefSeq" id="NP_417858.4">
    <property type="nucleotide sequence ID" value="NC_000913.3"/>
</dbReference>
<dbReference type="RefSeq" id="WP_001295168.1">
    <property type="nucleotide sequence ID" value="NZ_STEB01000004.1"/>
</dbReference>
<dbReference type="SMR" id="P64636"/>
<dbReference type="BioGRID" id="4260978">
    <property type="interactions" value="22"/>
</dbReference>
<dbReference type="FunCoup" id="P64636">
    <property type="interactions" value="198"/>
</dbReference>
<dbReference type="STRING" id="511145.b3399"/>
<dbReference type="PaxDb" id="511145-b3399"/>
<dbReference type="EnsemblBacteria" id="AAC76424">
    <property type="protein sequence ID" value="AAC76424"/>
    <property type="gene ID" value="b3399"/>
</dbReference>
<dbReference type="GeneID" id="93778599"/>
<dbReference type="GeneID" id="947904"/>
<dbReference type="KEGG" id="ecj:JW5865"/>
<dbReference type="KEGG" id="eco:b3399"/>
<dbReference type="KEGG" id="ecoc:C3026_18440"/>
<dbReference type="PATRIC" id="fig|1411691.4.peg.3331"/>
<dbReference type="EchoBASE" id="EB2764"/>
<dbReference type="eggNOG" id="COG1011">
    <property type="taxonomic scope" value="Bacteria"/>
</dbReference>
<dbReference type="HOGENOM" id="CLU_106706_0_0_6"/>
<dbReference type="InParanoid" id="P64636"/>
<dbReference type="OMA" id="LDIYQMT"/>
<dbReference type="OrthoDB" id="9773910at2"/>
<dbReference type="PhylomeDB" id="P64636"/>
<dbReference type="BioCyc" id="EcoCyc:G7742-MONOMER"/>
<dbReference type="BioCyc" id="MetaCyc:G7742-MONOMER"/>
<dbReference type="PRO" id="PR:P64636"/>
<dbReference type="Proteomes" id="UP000000625">
    <property type="component" value="Chromosome"/>
</dbReference>
<dbReference type="GO" id="GO:0005829">
    <property type="term" value="C:cytosol"/>
    <property type="evidence" value="ECO:0000318"/>
    <property type="project" value="GO_Central"/>
</dbReference>
<dbReference type="GO" id="GO:0050484">
    <property type="term" value="F:GMP 5'-nucleotidase activity"/>
    <property type="evidence" value="ECO:0000314"/>
    <property type="project" value="EcoCyc"/>
</dbReference>
<dbReference type="GO" id="GO:0050483">
    <property type="term" value="F:IMP 5'-nucleotidase activity"/>
    <property type="evidence" value="ECO:0000314"/>
    <property type="project" value="EcoCyc"/>
</dbReference>
<dbReference type="GO" id="GO:0000287">
    <property type="term" value="F:magnesium ion binding"/>
    <property type="evidence" value="ECO:0000314"/>
    <property type="project" value="UniProtKB"/>
</dbReference>
<dbReference type="GO" id="GO:0030145">
    <property type="term" value="F:manganese ion binding"/>
    <property type="evidence" value="ECO:0000314"/>
    <property type="project" value="UniProtKB"/>
</dbReference>
<dbReference type="GO" id="GO:0008967">
    <property type="term" value="F:phosphoglycolate phosphatase activity"/>
    <property type="evidence" value="ECO:0000318"/>
    <property type="project" value="GO_Central"/>
</dbReference>
<dbReference type="GO" id="GO:0008477">
    <property type="term" value="F:purine nucleosidase activity"/>
    <property type="evidence" value="ECO:0000314"/>
    <property type="project" value="EcoliWiki"/>
</dbReference>
<dbReference type="GO" id="GO:0006281">
    <property type="term" value="P:DNA repair"/>
    <property type="evidence" value="ECO:0000318"/>
    <property type="project" value="GO_Central"/>
</dbReference>
<dbReference type="Gene3D" id="3.40.50.1000">
    <property type="entry name" value="HAD superfamily/HAD-like"/>
    <property type="match status" value="1"/>
</dbReference>
<dbReference type="InterPro" id="IPR050155">
    <property type="entry name" value="HAD-like_hydrolase_sf"/>
</dbReference>
<dbReference type="InterPro" id="IPR036412">
    <property type="entry name" value="HAD-like_sf"/>
</dbReference>
<dbReference type="InterPro" id="IPR006439">
    <property type="entry name" value="HAD-SF_hydro_IA"/>
</dbReference>
<dbReference type="InterPro" id="IPR023214">
    <property type="entry name" value="HAD_sf"/>
</dbReference>
<dbReference type="NCBIfam" id="TIGR01509">
    <property type="entry name" value="HAD-SF-IA-v3"/>
    <property type="match status" value="1"/>
</dbReference>
<dbReference type="NCBIfam" id="NF011564">
    <property type="entry name" value="PRK14988.1"/>
    <property type="match status" value="1"/>
</dbReference>
<dbReference type="PANTHER" id="PTHR43434:SF3">
    <property type="entry name" value="GMP_IMP NUCLEOTIDASE YRFG"/>
    <property type="match status" value="1"/>
</dbReference>
<dbReference type="PANTHER" id="PTHR43434">
    <property type="entry name" value="PHOSPHOGLYCOLATE PHOSPHATASE"/>
    <property type="match status" value="1"/>
</dbReference>
<dbReference type="Pfam" id="PF00702">
    <property type="entry name" value="Hydrolase"/>
    <property type="match status" value="1"/>
</dbReference>
<dbReference type="PRINTS" id="PR00413">
    <property type="entry name" value="HADHALOGNASE"/>
</dbReference>
<dbReference type="SFLD" id="SFLDG01129">
    <property type="entry name" value="C1.5:_HAD__Beta-PGM__Phosphata"/>
    <property type="match status" value="1"/>
</dbReference>
<dbReference type="SFLD" id="SFLDS00003">
    <property type="entry name" value="Haloacid_Dehalogenase"/>
    <property type="match status" value="1"/>
</dbReference>
<dbReference type="SUPFAM" id="SSF56784">
    <property type="entry name" value="HAD-like"/>
    <property type="match status" value="1"/>
</dbReference>
<keyword id="KW-0378">Hydrolase</keyword>
<keyword id="KW-0460">Magnesium</keyword>
<keyword id="KW-0464">Manganese</keyword>
<keyword id="KW-0479">Metal-binding</keyword>
<keyword id="KW-1185">Reference proteome</keyword>
<sequence>MHINIAWQDVDTVLLDMDGTLLDLAFDNYFWQKLVPETWGAKNGVTPQEAMEYMRQQYHDVQHTLNWYCLDYWSEQLGLDICAMTTEMGPRAVLREDTIPFLEALKASGKQRILLTNAHPHNLAVKLEHTGLDAHLDLLLSTHTFGYPKEDQRLWHAVAEATGLKAERTLFIDDSEAILDAAAQFGIRYCLGVTNPDSGIAEKQYQRHPSLNDYRRLIPSLM</sequence>
<comment type="function">
    <text evidence="2">Catalyzes the dephosphorylation of different purine nucleotides (GMP and IMP). Also hydrolyzes flavin mononucleotide (FMN).</text>
</comment>
<comment type="catalytic activity">
    <reaction>
        <text>a ribonucleoside 5'-phosphate + H2O = a ribonucleoside + phosphate</text>
        <dbReference type="Rhea" id="RHEA:12484"/>
        <dbReference type="ChEBI" id="CHEBI:15377"/>
        <dbReference type="ChEBI" id="CHEBI:18254"/>
        <dbReference type="ChEBI" id="CHEBI:43474"/>
        <dbReference type="ChEBI" id="CHEBI:58043"/>
        <dbReference type="EC" id="3.1.3.5"/>
    </reaction>
</comment>
<comment type="cofactor">
    <cofactor evidence="2">
        <name>Mg(2+)</name>
        <dbReference type="ChEBI" id="CHEBI:18420"/>
    </cofactor>
    <cofactor evidence="2">
        <name>Mn(2+)</name>
        <dbReference type="ChEBI" id="CHEBI:29035"/>
    </cofactor>
    <cofactor evidence="2">
        <name>Co(2+)</name>
        <dbReference type="ChEBI" id="CHEBI:48828"/>
    </cofactor>
    <cofactor evidence="2">
        <name>Zn(2+)</name>
        <dbReference type="ChEBI" id="CHEBI:29105"/>
    </cofactor>
    <text evidence="2">Magnesium. Can also use other divalent metal cations as manganese, cobalt or zinc.</text>
</comment>
<comment type="biophysicochemical properties">
    <kinetics>
        <KM evidence="2">0.01 mM for IMP (with manganese ions as cofactor and at pH 9)</KM>
        <KM evidence="2">0.012 mM for GMP (with manganese ions as cofactor and at pH 9)</KM>
        <KM evidence="2">0.062 mM for GMP (with magnesium ions as cofactor and at pH 9)</KM>
        <KM evidence="2">0.22 mM for IMP (with magnesium ions as cofactor and at pH 9)</KM>
    </kinetics>
    <phDependence>
        <text evidence="2">Optimum pH is between 6 and 7.5.</text>
    </phDependence>
</comment>
<comment type="similarity">
    <text evidence="3">Belongs to the HAD-like hydrolase superfamily.</text>
</comment>
<comment type="sequence caution" evidence="3">
    <conflict type="erroneous initiation">
        <sequence resource="EMBL-CDS" id="AAA58196"/>
    </conflict>
    <text>Extended N-terminus.</text>
</comment>
<reference key="1">
    <citation type="journal article" date="1997" name="Science">
        <title>The complete genome sequence of Escherichia coli K-12.</title>
        <authorList>
            <person name="Blattner F.R."/>
            <person name="Plunkett G. III"/>
            <person name="Bloch C.A."/>
            <person name="Perna N.T."/>
            <person name="Burland V."/>
            <person name="Riley M."/>
            <person name="Collado-Vides J."/>
            <person name="Glasner J.D."/>
            <person name="Rode C.K."/>
            <person name="Mayhew G.F."/>
            <person name="Gregor J."/>
            <person name="Davis N.W."/>
            <person name="Kirkpatrick H.A."/>
            <person name="Goeden M.A."/>
            <person name="Rose D.J."/>
            <person name="Mau B."/>
            <person name="Shao Y."/>
        </authorList>
    </citation>
    <scope>NUCLEOTIDE SEQUENCE [LARGE SCALE GENOMIC DNA]</scope>
    <source>
        <strain>K12 / MG1655 / ATCC 47076</strain>
    </source>
</reference>
<reference key="2">
    <citation type="journal article" date="2006" name="Mol. Syst. Biol.">
        <title>Highly accurate genome sequences of Escherichia coli K-12 strains MG1655 and W3110.</title>
        <authorList>
            <person name="Hayashi K."/>
            <person name="Morooka N."/>
            <person name="Yamamoto Y."/>
            <person name="Fujita K."/>
            <person name="Isono K."/>
            <person name="Choi S."/>
            <person name="Ohtsubo E."/>
            <person name="Baba T."/>
            <person name="Wanner B.L."/>
            <person name="Mori H."/>
            <person name="Horiuchi T."/>
        </authorList>
    </citation>
    <scope>NUCLEOTIDE SEQUENCE [LARGE SCALE GENOMIC DNA]</scope>
    <source>
        <strain>K12 / W3110 / ATCC 27325 / DSM 5911</strain>
    </source>
</reference>
<reference key="3">
    <citation type="journal article" date="2006" name="J. Biol. Chem.">
        <title>Genome-wide analysis of substrate specificities of the Escherichia coli haloacid dehalogenase-like phosphatase family.</title>
        <authorList>
            <person name="Kuznetsova E."/>
            <person name="Proudfoot M."/>
            <person name="Gonzalez C.F."/>
            <person name="Brown G."/>
            <person name="Omelchenko M.V."/>
            <person name="Borozan I."/>
            <person name="Carmel L."/>
            <person name="Wolf Y.I."/>
            <person name="Mori H."/>
            <person name="Savchenko A.V."/>
            <person name="Arrowsmith C.H."/>
            <person name="Koonin E.V."/>
            <person name="Edwards A.M."/>
            <person name="Yakunin A.F."/>
        </authorList>
    </citation>
    <scope>FUNCTION AS A PURINE NUCLEOTIDASE</scope>
    <scope>BIOPHYSICOCHEMICAL PROPERTIES</scope>
    <scope>SUBSTRATE SPECIFICITY</scope>
    <scope>COFACTOR</scope>
</reference>
<evidence type="ECO:0000250" key="1"/>
<evidence type="ECO:0000269" key="2">
    <source>
    </source>
</evidence>
<evidence type="ECO:0000305" key="3"/>